<keyword id="KW-0053">Apoptosis</keyword>
<keyword id="KW-0539">Nucleus</keyword>
<keyword id="KW-0597">Phosphoprotein</keyword>
<keyword id="KW-1185">Reference proteome</keyword>
<keyword id="KW-0678">Repressor</keyword>
<keyword id="KW-0804">Transcription</keyword>
<keyword id="KW-0805">Transcription regulation</keyword>
<protein>
    <recommendedName>
        <fullName>Nucleolar complex protein 2 homolog</fullName>
        <shortName>Protein NOC2 homolog</shortName>
    </recommendedName>
    <alternativeName>
        <fullName>NOC2-like protein</fullName>
    </alternativeName>
    <alternativeName>
        <fullName>Novel INHAT repressor</fullName>
    </alternativeName>
</protein>
<sequence length="746" mass="84744">MAAALSRKRRLEELTVDEFLASGFDSESESEPEGAPEAETQAVRAAAREPDGPGGSPLASRRKGGASEHKDQLSRLKDKDPEFYKFLQENDQSLLNFSDSDSSEDEEEQLHSLPNMLEEASEEEEEEDGVPRGPEGKRRDSVPVTLAMVEKWKQAAKQHLTPKLFHEVVQAFRAAVATTQGDEEGAETSKFQVTDSAVFNALVTFCIRDLFGCLQKLLFGKAPKDSSRVLQPSSSPLWAKLRLDVKAYLSSVIQLVACVAEATVAAAILQHVGSSVPYYLTFPKQCRMLLKRMVVLWSTGEETLRVLAFVVLIKVCRHKKDVFLSPVLKQMYITYVRNCKFTSPSTLPLINFMQRTLTELLALDTGVAYQHAFLYIRQLAIHLRNAMTTRRKETYQSVYNWQFVHCLYLWCRALSTICPSEALQPLIYPLSQVVIGCIKLVPTARFYPLRMHCVRALTLLSESTGTFIPVLPFILEIFQQVDFNRRPGRISSRPINFAVILKLSKVNLQEKAYRDGLVEQLYDLTLEYLHSQAHSIAFPELVLPAVLQLKSFLRECKVANYCRQVRQLLEKVQENAEHIRSVRQKVSFGVSDQRAVDAWEKRTREEGTPLTKYYSQWRKLRDREIQLEISGKERLEDLNFPEVKRRKVGDRKDEDRAEFKDLFDLESDDEDDAPDFTKRGMPGSPGAWQKVEEEDDDSSSSSGEEEVSKSEDGSPDTEAGLDPQELWQLAQGPEDELQDLQLSEED</sequence>
<feature type="chain" id="PRO_0000247488" description="Nucleolar complex protein 2 homolog">
    <location>
        <begin position="1"/>
        <end position="746"/>
    </location>
</feature>
<feature type="region of interest" description="Disordered" evidence="3">
    <location>
        <begin position="19"/>
        <end position="82"/>
    </location>
</feature>
<feature type="region of interest" description="Disordered" evidence="3">
    <location>
        <begin position="117"/>
        <end position="141"/>
    </location>
</feature>
<feature type="region of interest" description="Disordered" evidence="3">
    <location>
        <begin position="662"/>
        <end position="746"/>
    </location>
</feature>
<feature type="compositionally biased region" description="Acidic residues" evidence="3">
    <location>
        <begin position="26"/>
        <end position="36"/>
    </location>
</feature>
<feature type="compositionally biased region" description="Basic and acidic residues" evidence="3">
    <location>
        <begin position="65"/>
        <end position="82"/>
    </location>
</feature>
<feature type="compositionally biased region" description="Acidic residues" evidence="3">
    <location>
        <begin position="119"/>
        <end position="128"/>
    </location>
</feature>
<feature type="compositionally biased region" description="Acidic residues" evidence="3">
    <location>
        <begin position="664"/>
        <end position="674"/>
    </location>
</feature>
<feature type="compositionally biased region" description="Acidic residues" evidence="3">
    <location>
        <begin position="733"/>
        <end position="746"/>
    </location>
</feature>
<feature type="modified residue" description="Phosphoserine" evidence="2">
    <location>
        <position position="56"/>
    </location>
</feature>
<feature type="modified residue" description="Phosphoserine" evidence="2">
    <location>
        <position position="93"/>
    </location>
</feature>
<feature type="modified residue" description="Phosphoserine" evidence="2">
    <location>
        <position position="667"/>
    </location>
</feature>
<feature type="modified residue" description="Phosphoserine" evidence="2">
    <location>
        <position position="743"/>
    </location>
</feature>
<gene>
    <name type="primary">NOC2L</name>
    <name type="synonym">NIR</name>
</gene>
<dbReference type="EMBL" id="BC103386">
    <property type="protein sequence ID" value="AAI03387.1"/>
    <property type="molecule type" value="mRNA"/>
</dbReference>
<dbReference type="RefSeq" id="NP_001029498.1">
    <property type="nucleotide sequence ID" value="NM_001034326.1"/>
</dbReference>
<dbReference type="SMR" id="Q3SYU1"/>
<dbReference type="FunCoup" id="Q3SYU1">
    <property type="interactions" value="3054"/>
</dbReference>
<dbReference type="STRING" id="9913.ENSBTAP00000021980"/>
<dbReference type="PaxDb" id="9913-ENSBTAP00000021980"/>
<dbReference type="GeneID" id="508638"/>
<dbReference type="KEGG" id="bta:508638"/>
<dbReference type="CTD" id="26155"/>
<dbReference type="VEuPathDB" id="HostDB:ENSBTAG00000016528"/>
<dbReference type="eggNOG" id="KOG2256">
    <property type="taxonomic scope" value="Eukaryota"/>
</dbReference>
<dbReference type="HOGENOM" id="CLU_011272_1_2_1"/>
<dbReference type="InParanoid" id="Q3SYU1"/>
<dbReference type="OMA" id="GCLRYYL"/>
<dbReference type="OrthoDB" id="10266662at2759"/>
<dbReference type="Reactome" id="R-BTA-6804756">
    <property type="pathway name" value="Regulation of TP53 Activity through Phosphorylation"/>
</dbReference>
<dbReference type="CD-CODE" id="D7FE2080">
    <property type="entry name" value="Nucleolus"/>
</dbReference>
<dbReference type="Proteomes" id="UP000009136">
    <property type="component" value="Chromosome 16"/>
</dbReference>
<dbReference type="Bgee" id="ENSBTAG00000016528">
    <property type="expression patterns" value="Expressed in retina and 104 other cell types or tissues"/>
</dbReference>
<dbReference type="GO" id="GO:0030690">
    <property type="term" value="C:Noc1p-Noc2p complex"/>
    <property type="evidence" value="ECO:0000318"/>
    <property type="project" value="GO_Central"/>
</dbReference>
<dbReference type="GO" id="GO:0030691">
    <property type="term" value="C:Noc2p-Noc3p complex"/>
    <property type="evidence" value="ECO:0000318"/>
    <property type="project" value="GO_Central"/>
</dbReference>
<dbReference type="GO" id="GO:0005730">
    <property type="term" value="C:nucleolus"/>
    <property type="evidence" value="ECO:0000318"/>
    <property type="project" value="GO_Central"/>
</dbReference>
<dbReference type="GO" id="GO:0005654">
    <property type="term" value="C:nucleoplasm"/>
    <property type="evidence" value="ECO:0000318"/>
    <property type="project" value="GO_Central"/>
</dbReference>
<dbReference type="GO" id="GO:0042393">
    <property type="term" value="F:histone binding"/>
    <property type="evidence" value="ECO:0000318"/>
    <property type="project" value="GO_Central"/>
</dbReference>
<dbReference type="GO" id="GO:0003714">
    <property type="term" value="F:transcription corepressor activity"/>
    <property type="evidence" value="ECO:0000318"/>
    <property type="project" value="GO_Central"/>
</dbReference>
<dbReference type="GO" id="GO:0006915">
    <property type="term" value="P:apoptotic process"/>
    <property type="evidence" value="ECO:0007669"/>
    <property type="project" value="UniProtKB-KW"/>
</dbReference>
<dbReference type="GO" id="GO:0000122">
    <property type="term" value="P:negative regulation of transcription by RNA polymerase II"/>
    <property type="evidence" value="ECO:0000318"/>
    <property type="project" value="GO_Central"/>
</dbReference>
<dbReference type="GO" id="GO:0042273">
    <property type="term" value="P:ribosomal large subunit biogenesis"/>
    <property type="evidence" value="ECO:0000318"/>
    <property type="project" value="GO_Central"/>
</dbReference>
<dbReference type="InterPro" id="IPR016024">
    <property type="entry name" value="ARM-type_fold"/>
</dbReference>
<dbReference type="InterPro" id="IPR005343">
    <property type="entry name" value="Noc2"/>
</dbReference>
<dbReference type="PANTHER" id="PTHR12687">
    <property type="entry name" value="NUCLEOLAR COMPLEX 2 AND RAD4-RELATED"/>
    <property type="match status" value="1"/>
</dbReference>
<dbReference type="PANTHER" id="PTHR12687:SF4">
    <property type="entry name" value="NUCLEOLAR COMPLEX PROTEIN 2 HOMOLOG"/>
    <property type="match status" value="1"/>
</dbReference>
<dbReference type="Pfam" id="PF03715">
    <property type="entry name" value="Noc2"/>
    <property type="match status" value="1"/>
</dbReference>
<dbReference type="SUPFAM" id="SSF48371">
    <property type="entry name" value="ARM repeat"/>
    <property type="match status" value="1"/>
</dbReference>
<organism>
    <name type="scientific">Bos taurus</name>
    <name type="common">Bovine</name>
    <dbReference type="NCBI Taxonomy" id="9913"/>
    <lineage>
        <taxon>Eukaryota</taxon>
        <taxon>Metazoa</taxon>
        <taxon>Chordata</taxon>
        <taxon>Craniata</taxon>
        <taxon>Vertebrata</taxon>
        <taxon>Euteleostomi</taxon>
        <taxon>Mammalia</taxon>
        <taxon>Eutheria</taxon>
        <taxon>Laurasiatheria</taxon>
        <taxon>Artiodactyla</taxon>
        <taxon>Ruminantia</taxon>
        <taxon>Pecora</taxon>
        <taxon>Bovidae</taxon>
        <taxon>Bovinae</taxon>
        <taxon>Bos</taxon>
    </lineage>
</organism>
<evidence type="ECO:0000250" key="1"/>
<evidence type="ECO:0000250" key="2">
    <source>
        <dbReference type="UniProtKB" id="Q9Y3T9"/>
    </source>
</evidence>
<evidence type="ECO:0000256" key="3">
    <source>
        <dbReference type="SAM" id="MobiDB-lite"/>
    </source>
</evidence>
<evidence type="ECO:0000305" key="4"/>
<name>NOC2L_BOVIN</name>
<reference key="1">
    <citation type="submission" date="2005-08" db="EMBL/GenBank/DDBJ databases">
        <authorList>
            <consortium name="NIH - Mammalian Gene Collection (MGC) project"/>
        </authorList>
    </citation>
    <scope>NUCLEOTIDE SEQUENCE [LARGE SCALE MRNA]</scope>
    <source>
        <strain>Crossbred X Angus</strain>
        <tissue>Ileum</tissue>
    </source>
</reference>
<accession>Q3SYU1</accession>
<comment type="function">
    <text evidence="1">Acts as an inhibitor of histone acetyltransferase activity; prevents acetylation of all core histones by the EP300/p300 histone acetyltransferase at p53/TP53-regulated target promoters in a histone deacetylases (HDAC)-independent manner. Acts as a transcription corepressor of p53/TP53- and TP63-mediated transactivation of the p21/CDKN1A promoter. Involved in the regulation of p53/TP53-dependent apoptosis (By similarity).</text>
</comment>
<comment type="subunit">
    <text>Interacts with p53/TP53. Interacts (via the N- and C-terminus domains) with AURKB (via the middle kinase domain). Interacts with TP63 (via activation domain). Interacts with histone H3 (via N-terminus and non-acetylated form preferentially). Associates with core histones and nucleosomes.</text>
</comment>
<comment type="subcellular location">
    <subcellularLocation>
        <location evidence="1">Nucleus</location>
        <location evidence="1">Nucleoplasm</location>
    </subcellularLocation>
    <subcellularLocation>
        <location evidence="1">Nucleus</location>
        <location evidence="1">Nucleolus</location>
    </subcellularLocation>
    <text evidence="1">Translocates from the nucleoli to the nucleoplasm in presence of several stressors like ultraviolet irradiation and actinomycin-D. Predominantly detected in the nucleoli in non-mitotic cells. Predominantly detected in nucleoplasma in cells undergoing mitosis (By similarity).</text>
</comment>
<comment type="similarity">
    <text evidence="4">Belongs to the NOC2 family.</text>
</comment>
<proteinExistence type="evidence at transcript level"/>